<sequence length="292" mass="33046">MNNGYLAFPQFDPVIFSIGPVSLHWYGLMYLVGFVFAMWLAVRRANKPGSGWKKEEVENLLYAGFLGVFLGGRIGYVLFYNMPLFLENPLYLFKVWDGGMSFHGGLIGVIVVMLVFAHRTKRHFFQVADFIAPLIPFGLGAGRLGNFINGELWGRVDPNLPWAMLFPGSRSEDIALVAAHPQWQQLLSTYGVLPRHPSQLYELILEGVVLFIILNLFIRKSRPMGAVSGLFLIGYGAFRIIVEFFRQPDQQLGLFGGISMGQILSLPMILAGVIMMIWAYRRRPQQRIREAK</sequence>
<evidence type="ECO:0000255" key="1">
    <source>
        <dbReference type="HAMAP-Rule" id="MF_01147"/>
    </source>
</evidence>
<protein>
    <recommendedName>
        <fullName evidence="1">Phosphatidylglycerol--prolipoprotein diacylglyceryl transferase</fullName>
        <ecNumber evidence="1">2.5.1.145</ecNumber>
    </recommendedName>
</protein>
<organism>
    <name type="scientific">Erwinia tasmaniensis (strain DSM 17950 / CFBP 7177 / CIP 109463 / NCPPB 4357 / Et1/99)</name>
    <dbReference type="NCBI Taxonomy" id="465817"/>
    <lineage>
        <taxon>Bacteria</taxon>
        <taxon>Pseudomonadati</taxon>
        <taxon>Pseudomonadota</taxon>
        <taxon>Gammaproteobacteria</taxon>
        <taxon>Enterobacterales</taxon>
        <taxon>Erwiniaceae</taxon>
        <taxon>Erwinia</taxon>
    </lineage>
</organism>
<reference key="1">
    <citation type="journal article" date="2008" name="Environ. Microbiol.">
        <title>The genome of Erwinia tasmaniensis strain Et1/99, a non-pathogenic bacterium in the genus Erwinia.</title>
        <authorList>
            <person name="Kube M."/>
            <person name="Migdoll A.M."/>
            <person name="Mueller I."/>
            <person name="Kuhl H."/>
            <person name="Beck A."/>
            <person name="Reinhardt R."/>
            <person name="Geider K."/>
        </authorList>
    </citation>
    <scope>NUCLEOTIDE SEQUENCE [LARGE SCALE GENOMIC DNA]</scope>
    <source>
        <strain>DSM 17950 / CFBP 7177 / CIP 109463 / NCPPB 4357 / Et1/99</strain>
    </source>
</reference>
<gene>
    <name evidence="1" type="primary">lgt</name>
    <name type="ordered locus">ETA_27600</name>
</gene>
<feature type="chain" id="PRO_1000137428" description="Phosphatidylglycerol--prolipoprotein diacylglyceryl transferase">
    <location>
        <begin position="1"/>
        <end position="292"/>
    </location>
</feature>
<feature type="transmembrane region" description="Helical" evidence="1">
    <location>
        <begin position="21"/>
        <end position="41"/>
    </location>
</feature>
<feature type="transmembrane region" description="Helical" evidence="1">
    <location>
        <begin position="60"/>
        <end position="80"/>
    </location>
</feature>
<feature type="transmembrane region" description="Helical" evidence="1">
    <location>
        <begin position="98"/>
        <end position="118"/>
    </location>
</feature>
<feature type="transmembrane region" description="Helical" evidence="1">
    <location>
        <begin position="124"/>
        <end position="144"/>
    </location>
</feature>
<feature type="transmembrane region" description="Helical" evidence="1">
    <location>
        <begin position="198"/>
        <end position="218"/>
    </location>
</feature>
<feature type="transmembrane region" description="Helical" evidence="1">
    <location>
        <begin position="225"/>
        <end position="245"/>
    </location>
</feature>
<feature type="transmembrane region" description="Helical" evidence="1">
    <location>
        <begin position="258"/>
        <end position="278"/>
    </location>
</feature>
<feature type="binding site" evidence="1">
    <location>
        <position position="143"/>
    </location>
    <ligand>
        <name>a 1,2-diacyl-sn-glycero-3-phospho-(1'-sn-glycerol)</name>
        <dbReference type="ChEBI" id="CHEBI:64716"/>
    </ligand>
</feature>
<comment type="function">
    <text evidence="1">Catalyzes the transfer of the diacylglyceryl group from phosphatidylglycerol to the sulfhydryl group of the N-terminal cysteine of a prolipoprotein, the first step in the formation of mature lipoproteins.</text>
</comment>
<comment type="catalytic activity">
    <reaction evidence="1">
        <text>L-cysteinyl-[prolipoprotein] + a 1,2-diacyl-sn-glycero-3-phospho-(1'-sn-glycerol) = an S-1,2-diacyl-sn-glyceryl-L-cysteinyl-[prolipoprotein] + sn-glycerol 1-phosphate + H(+)</text>
        <dbReference type="Rhea" id="RHEA:56712"/>
        <dbReference type="Rhea" id="RHEA-COMP:14679"/>
        <dbReference type="Rhea" id="RHEA-COMP:14680"/>
        <dbReference type="ChEBI" id="CHEBI:15378"/>
        <dbReference type="ChEBI" id="CHEBI:29950"/>
        <dbReference type="ChEBI" id="CHEBI:57685"/>
        <dbReference type="ChEBI" id="CHEBI:64716"/>
        <dbReference type="ChEBI" id="CHEBI:140658"/>
        <dbReference type="EC" id="2.5.1.145"/>
    </reaction>
</comment>
<comment type="pathway">
    <text evidence="1">Protein modification; lipoprotein biosynthesis (diacylglyceryl transfer).</text>
</comment>
<comment type="subcellular location">
    <subcellularLocation>
        <location evidence="1">Cell inner membrane</location>
        <topology evidence="1">Multi-pass membrane protein</topology>
    </subcellularLocation>
</comment>
<comment type="similarity">
    <text evidence="1">Belongs to the Lgt family.</text>
</comment>
<proteinExistence type="inferred from homology"/>
<keyword id="KW-0997">Cell inner membrane</keyword>
<keyword id="KW-1003">Cell membrane</keyword>
<keyword id="KW-0472">Membrane</keyword>
<keyword id="KW-1185">Reference proteome</keyword>
<keyword id="KW-0808">Transferase</keyword>
<keyword id="KW-0812">Transmembrane</keyword>
<keyword id="KW-1133">Transmembrane helix</keyword>
<name>LGT_ERWT9</name>
<dbReference type="EC" id="2.5.1.145" evidence="1"/>
<dbReference type="EMBL" id="CU468135">
    <property type="protein sequence ID" value="CAO97806.1"/>
    <property type="molecule type" value="Genomic_DNA"/>
</dbReference>
<dbReference type="RefSeq" id="WP_012442463.1">
    <property type="nucleotide sequence ID" value="NC_010694.1"/>
</dbReference>
<dbReference type="SMR" id="B2VFU8"/>
<dbReference type="STRING" id="465817.ETA_27600"/>
<dbReference type="KEGG" id="eta:ETA_27600"/>
<dbReference type="eggNOG" id="COG0682">
    <property type="taxonomic scope" value="Bacteria"/>
</dbReference>
<dbReference type="HOGENOM" id="CLU_013386_1_0_6"/>
<dbReference type="OrthoDB" id="871140at2"/>
<dbReference type="UniPathway" id="UPA00664"/>
<dbReference type="Proteomes" id="UP000001726">
    <property type="component" value="Chromosome"/>
</dbReference>
<dbReference type="GO" id="GO:0005886">
    <property type="term" value="C:plasma membrane"/>
    <property type="evidence" value="ECO:0007669"/>
    <property type="project" value="UniProtKB-SubCell"/>
</dbReference>
<dbReference type="GO" id="GO:0008961">
    <property type="term" value="F:phosphatidylglycerol-prolipoprotein diacylglyceryl transferase activity"/>
    <property type="evidence" value="ECO:0007669"/>
    <property type="project" value="UniProtKB-UniRule"/>
</dbReference>
<dbReference type="GO" id="GO:0042158">
    <property type="term" value="P:lipoprotein biosynthetic process"/>
    <property type="evidence" value="ECO:0007669"/>
    <property type="project" value="UniProtKB-UniRule"/>
</dbReference>
<dbReference type="HAMAP" id="MF_01147">
    <property type="entry name" value="Lgt"/>
    <property type="match status" value="1"/>
</dbReference>
<dbReference type="InterPro" id="IPR001640">
    <property type="entry name" value="Lgt"/>
</dbReference>
<dbReference type="NCBIfam" id="TIGR00544">
    <property type="entry name" value="lgt"/>
    <property type="match status" value="1"/>
</dbReference>
<dbReference type="PANTHER" id="PTHR30589:SF0">
    <property type="entry name" value="PHOSPHATIDYLGLYCEROL--PROLIPOPROTEIN DIACYLGLYCERYL TRANSFERASE"/>
    <property type="match status" value="1"/>
</dbReference>
<dbReference type="PANTHER" id="PTHR30589">
    <property type="entry name" value="PROLIPOPROTEIN DIACYLGLYCERYL TRANSFERASE"/>
    <property type="match status" value="1"/>
</dbReference>
<dbReference type="Pfam" id="PF01790">
    <property type="entry name" value="LGT"/>
    <property type="match status" value="1"/>
</dbReference>
<dbReference type="PROSITE" id="PS01311">
    <property type="entry name" value="LGT"/>
    <property type="match status" value="1"/>
</dbReference>
<accession>B2VFU8</accession>